<comment type="function">
    <text evidence="1">The RuvA-RuvB-RuvC complex processes Holliday junction (HJ) DNA during genetic recombination and DNA repair, while the RuvA-RuvB complex plays an important role in the rescue of blocked DNA replication forks via replication fork reversal (RFR). RuvA specifically binds to HJ cruciform DNA, conferring on it an open structure. The RuvB hexamer acts as an ATP-dependent pump, pulling dsDNA into and through the RuvAB complex. RuvB forms 2 homohexamers on either side of HJ DNA bound by 1 or 2 RuvA tetramers; 4 subunits per hexamer contact DNA at a time. Coordinated motions by a converter formed by DNA-disengaged RuvB subunits stimulates ATP hydrolysis and nucleotide exchange. Immobilization of the converter enables RuvB to convert the ATP-contained energy into a lever motion, pulling 2 nucleotides of DNA out of the RuvA tetramer per ATP hydrolyzed, thus driving DNA branch migration. The RuvB motors rotate together with the DNA substrate, which together with the progressing nucleotide cycle form the mechanistic basis for DNA recombination by continuous HJ branch migration. Branch migration allows RuvC to scan DNA until it finds its consensus sequence, where it cleaves and resolves cruciform DNA.</text>
</comment>
<comment type="catalytic activity">
    <reaction evidence="1">
        <text>ATP + H2O = ADP + phosphate + H(+)</text>
        <dbReference type="Rhea" id="RHEA:13065"/>
        <dbReference type="ChEBI" id="CHEBI:15377"/>
        <dbReference type="ChEBI" id="CHEBI:15378"/>
        <dbReference type="ChEBI" id="CHEBI:30616"/>
        <dbReference type="ChEBI" id="CHEBI:43474"/>
        <dbReference type="ChEBI" id="CHEBI:456216"/>
    </reaction>
</comment>
<comment type="subunit">
    <text evidence="1">Homohexamer. Forms an RuvA(8)-RuvB(12)-Holliday junction (HJ) complex. HJ DNA is sandwiched between 2 RuvA tetramers; dsDNA enters through RuvA and exits via RuvB. An RuvB hexamer assembles on each DNA strand where it exits the tetramer. Each RuvB hexamer is contacted by two RuvA subunits (via domain III) on 2 adjacent RuvB subunits; this complex drives branch migration. In the full resolvosome a probable DNA-RuvA(4)-RuvB(12)-RuvC(2) complex forms which resolves the HJ.</text>
</comment>
<comment type="subcellular location">
    <subcellularLocation>
        <location evidence="1">Cytoplasm</location>
    </subcellularLocation>
</comment>
<comment type="domain">
    <text evidence="1">Has 3 domains, the large (RuvB-L) and small ATPase (RuvB-S) domains and the C-terminal head (RuvB-H) domain. The head domain binds DNA, while the ATPase domains jointly bind ATP, ADP or are empty depending on the state of the subunit in the translocation cycle. During a single DNA translocation step the structure of each domain remains the same, but their relative positions change.</text>
</comment>
<comment type="similarity">
    <text evidence="1">Belongs to the RuvB family.</text>
</comment>
<accession>Q1IHV6</accession>
<evidence type="ECO:0000255" key="1">
    <source>
        <dbReference type="HAMAP-Rule" id="MF_00016"/>
    </source>
</evidence>
<evidence type="ECO:0000256" key="2">
    <source>
        <dbReference type="SAM" id="MobiDB-lite"/>
    </source>
</evidence>
<reference key="1">
    <citation type="journal article" date="2009" name="Appl. Environ. Microbiol.">
        <title>Three genomes from the phylum Acidobacteria provide insight into the lifestyles of these microorganisms in soils.</title>
        <authorList>
            <person name="Ward N.L."/>
            <person name="Challacombe J.F."/>
            <person name="Janssen P.H."/>
            <person name="Henrissat B."/>
            <person name="Coutinho P.M."/>
            <person name="Wu M."/>
            <person name="Xie G."/>
            <person name="Haft D.H."/>
            <person name="Sait M."/>
            <person name="Badger J."/>
            <person name="Barabote R.D."/>
            <person name="Bradley B."/>
            <person name="Brettin T.S."/>
            <person name="Brinkac L.M."/>
            <person name="Bruce D."/>
            <person name="Creasy T."/>
            <person name="Daugherty S.C."/>
            <person name="Davidsen T.M."/>
            <person name="DeBoy R.T."/>
            <person name="Detter J.C."/>
            <person name="Dodson R.J."/>
            <person name="Durkin A.S."/>
            <person name="Ganapathy A."/>
            <person name="Gwinn-Giglio M."/>
            <person name="Han C.S."/>
            <person name="Khouri H."/>
            <person name="Kiss H."/>
            <person name="Kothari S.P."/>
            <person name="Madupu R."/>
            <person name="Nelson K.E."/>
            <person name="Nelson W.C."/>
            <person name="Paulsen I."/>
            <person name="Penn K."/>
            <person name="Ren Q."/>
            <person name="Rosovitz M.J."/>
            <person name="Selengut J.D."/>
            <person name="Shrivastava S."/>
            <person name="Sullivan S.A."/>
            <person name="Tapia R."/>
            <person name="Thompson L.S."/>
            <person name="Watkins K.L."/>
            <person name="Yang Q."/>
            <person name="Yu C."/>
            <person name="Zafar N."/>
            <person name="Zhou L."/>
            <person name="Kuske C.R."/>
        </authorList>
    </citation>
    <scope>NUCLEOTIDE SEQUENCE [LARGE SCALE GENOMIC DNA]</scope>
    <source>
        <strain>Ellin345</strain>
    </source>
</reference>
<protein>
    <recommendedName>
        <fullName evidence="1">Holliday junction branch migration complex subunit RuvB</fullName>
        <ecNumber evidence="1">3.6.4.-</ecNumber>
    </recommendedName>
</protein>
<keyword id="KW-0067">ATP-binding</keyword>
<keyword id="KW-0963">Cytoplasm</keyword>
<keyword id="KW-0227">DNA damage</keyword>
<keyword id="KW-0233">DNA recombination</keyword>
<keyword id="KW-0234">DNA repair</keyword>
<keyword id="KW-0238">DNA-binding</keyword>
<keyword id="KW-0378">Hydrolase</keyword>
<keyword id="KW-0547">Nucleotide-binding</keyword>
<keyword id="KW-1185">Reference proteome</keyword>
<gene>
    <name evidence="1" type="primary">ruvB</name>
    <name type="ordered locus">Acid345_4544</name>
</gene>
<dbReference type="EC" id="3.6.4.-" evidence="1"/>
<dbReference type="EMBL" id="CP000360">
    <property type="protein sequence ID" value="ABF43544.1"/>
    <property type="molecule type" value="Genomic_DNA"/>
</dbReference>
<dbReference type="RefSeq" id="WP_011525341.1">
    <property type="nucleotide sequence ID" value="NC_008009.1"/>
</dbReference>
<dbReference type="SMR" id="Q1IHV6"/>
<dbReference type="STRING" id="204669.Acid345_4544"/>
<dbReference type="EnsemblBacteria" id="ABF43544">
    <property type="protein sequence ID" value="ABF43544"/>
    <property type="gene ID" value="Acid345_4544"/>
</dbReference>
<dbReference type="KEGG" id="aba:Acid345_4544"/>
<dbReference type="eggNOG" id="COG2255">
    <property type="taxonomic scope" value="Bacteria"/>
</dbReference>
<dbReference type="HOGENOM" id="CLU_055599_1_0_0"/>
<dbReference type="OrthoDB" id="9804478at2"/>
<dbReference type="Proteomes" id="UP000002432">
    <property type="component" value="Chromosome"/>
</dbReference>
<dbReference type="GO" id="GO:0005737">
    <property type="term" value="C:cytoplasm"/>
    <property type="evidence" value="ECO:0007669"/>
    <property type="project" value="UniProtKB-SubCell"/>
</dbReference>
<dbReference type="GO" id="GO:0048476">
    <property type="term" value="C:Holliday junction resolvase complex"/>
    <property type="evidence" value="ECO:0007669"/>
    <property type="project" value="UniProtKB-UniRule"/>
</dbReference>
<dbReference type="GO" id="GO:0005524">
    <property type="term" value="F:ATP binding"/>
    <property type="evidence" value="ECO:0007669"/>
    <property type="project" value="UniProtKB-UniRule"/>
</dbReference>
<dbReference type="GO" id="GO:0016887">
    <property type="term" value="F:ATP hydrolysis activity"/>
    <property type="evidence" value="ECO:0007669"/>
    <property type="project" value="InterPro"/>
</dbReference>
<dbReference type="GO" id="GO:0000400">
    <property type="term" value="F:four-way junction DNA binding"/>
    <property type="evidence" value="ECO:0007669"/>
    <property type="project" value="UniProtKB-UniRule"/>
</dbReference>
<dbReference type="GO" id="GO:0009378">
    <property type="term" value="F:four-way junction helicase activity"/>
    <property type="evidence" value="ECO:0007669"/>
    <property type="project" value="InterPro"/>
</dbReference>
<dbReference type="GO" id="GO:0006310">
    <property type="term" value="P:DNA recombination"/>
    <property type="evidence" value="ECO:0007669"/>
    <property type="project" value="UniProtKB-UniRule"/>
</dbReference>
<dbReference type="GO" id="GO:0006281">
    <property type="term" value="P:DNA repair"/>
    <property type="evidence" value="ECO:0007669"/>
    <property type="project" value="UniProtKB-UniRule"/>
</dbReference>
<dbReference type="CDD" id="cd00009">
    <property type="entry name" value="AAA"/>
    <property type="match status" value="1"/>
</dbReference>
<dbReference type="Gene3D" id="1.10.8.60">
    <property type="match status" value="1"/>
</dbReference>
<dbReference type="Gene3D" id="3.40.50.300">
    <property type="entry name" value="P-loop containing nucleotide triphosphate hydrolases"/>
    <property type="match status" value="1"/>
</dbReference>
<dbReference type="Gene3D" id="1.10.10.10">
    <property type="entry name" value="Winged helix-like DNA-binding domain superfamily/Winged helix DNA-binding domain"/>
    <property type="match status" value="1"/>
</dbReference>
<dbReference type="HAMAP" id="MF_00016">
    <property type="entry name" value="DNA_HJ_migration_RuvB"/>
    <property type="match status" value="1"/>
</dbReference>
<dbReference type="InterPro" id="IPR003593">
    <property type="entry name" value="AAA+_ATPase"/>
</dbReference>
<dbReference type="InterPro" id="IPR041445">
    <property type="entry name" value="AAA_lid_4"/>
</dbReference>
<dbReference type="InterPro" id="IPR004605">
    <property type="entry name" value="DNA_helicase_Holl-junc_RuvB"/>
</dbReference>
<dbReference type="InterPro" id="IPR027417">
    <property type="entry name" value="P-loop_NTPase"/>
</dbReference>
<dbReference type="InterPro" id="IPR008824">
    <property type="entry name" value="RuvB-like_N"/>
</dbReference>
<dbReference type="InterPro" id="IPR008823">
    <property type="entry name" value="RuvB_C"/>
</dbReference>
<dbReference type="InterPro" id="IPR036388">
    <property type="entry name" value="WH-like_DNA-bd_sf"/>
</dbReference>
<dbReference type="InterPro" id="IPR036390">
    <property type="entry name" value="WH_DNA-bd_sf"/>
</dbReference>
<dbReference type="NCBIfam" id="NF000868">
    <property type="entry name" value="PRK00080.1"/>
    <property type="match status" value="1"/>
</dbReference>
<dbReference type="NCBIfam" id="TIGR00635">
    <property type="entry name" value="ruvB"/>
    <property type="match status" value="1"/>
</dbReference>
<dbReference type="PANTHER" id="PTHR42848">
    <property type="match status" value="1"/>
</dbReference>
<dbReference type="PANTHER" id="PTHR42848:SF1">
    <property type="entry name" value="HOLLIDAY JUNCTION BRANCH MIGRATION COMPLEX SUBUNIT RUVB"/>
    <property type="match status" value="1"/>
</dbReference>
<dbReference type="Pfam" id="PF17864">
    <property type="entry name" value="AAA_lid_4"/>
    <property type="match status" value="1"/>
</dbReference>
<dbReference type="Pfam" id="PF05491">
    <property type="entry name" value="RuvB_C"/>
    <property type="match status" value="1"/>
</dbReference>
<dbReference type="Pfam" id="PF05496">
    <property type="entry name" value="RuvB_N"/>
    <property type="match status" value="1"/>
</dbReference>
<dbReference type="SMART" id="SM00382">
    <property type="entry name" value="AAA"/>
    <property type="match status" value="1"/>
</dbReference>
<dbReference type="SUPFAM" id="SSF52540">
    <property type="entry name" value="P-loop containing nucleoside triphosphate hydrolases"/>
    <property type="match status" value="1"/>
</dbReference>
<dbReference type="SUPFAM" id="SSF46785">
    <property type="entry name" value="Winged helix' DNA-binding domain"/>
    <property type="match status" value="1"/>
</dbReference>
<organism>
    <name type="scientific">Koribacter versatilis (strain Ellin345)</name>
    <dbReference type="NCBI Taxonomy" id="204669"/>
    <lineage>
        <taxon>Bacteria</taxon>
        <taxon>Pseudomonadati</taxon>
        <taxon>Acidobacteriota</taxon>
        <taxon>Terriglobia</taxon>
        <taxon>Terriglobales</taxon>
        <taxon>Candidatus Korobacteraceae</taxon>
        <taxon>Candidatus Korobacter</taxon>
    </lineage>
</organism>
<feature type="chain" id="PRO_0000322773" description="Holliday junction branch migration complex subunit RuvB">
    <location>
        <begin position="1"/>
        <end position="360"/>
    </location>
</feature>
<feature type="region of interest" description="Disordered" evidence="2">
    <location>
        <begin position="1"/>
        <end position="23"/>
    </location>
</feature>
<feature type="region of interest" description="Large ATPase domain (RuvB-L)" evidence="1">
    <location>
        <begin position="12"/>
        <end position="204"/>
    </location>
</feature>
<feature type="region of interest" description="Small ATPAse domain (RuvB-S)" evidence="1">
    <location>
        <begin position="205"/>
        <end position="275"/>
    </location>
</feature>
<feature type="region of interest" description="Head domain (RuvB-H)" evidence="1">
    <location>
        <begin position="278"/>
        <end position="360"/>
    </location>
</feature>
<feature type="binding site" evidence="1">
    <location>
        <position position="43"/>
    </location>
    <ligand>
        <name>ATP</name>
        <dbReference type="ChEBI" id="CHEBI:30616"/>
    </ligand>
</feature>
<feature type="binding site" evidence="1">
    <location>
        <position position="44"/>
    </location>
    <ligand>
        <name>ATP</name>
        <dbReference type="ChEBI" id="CHEBI:30616"/>
    </ligand>
</feature>
<feature type="binding site" evidence="1">
    <location>
        <position position="85"/>
    </location>
    <ligand>
        <name>ATP</name>
        <dbReference type="ChEBI" id="CHEBI:30616"/>
    </ligand>
</feature>
<feature type="binding site" evidence="1">
    <location>
        <position position="88"/>
    </location>
    <ligand>
        <name>ATP</name>
        <dbReference type="ChEBI" id="CHEBI:30616"/>
    </ligand>
</feature>
<feature type="binding site" evidence="1">
    <location>
        <position position="89"/>
    </location>
    <ligand>
        <name>ATP</name>
        <dbReference type="ChEBI" id="CHEBI:30616"/>
    </ligand>
</feature>
<feature type="binding site" evidence="1">
    <location>
        <position position="89"/>
    </location>
    <ligand>
        <name>Mg(2+)</name>
        <dbReference type="ChEBI" id="CHEBI:18420"/>
    </ligand>
</feature>
<feature type="binding site" evidence="1">
    <location>
        <position position="90"/>
    </location>
    <ligand>
        <name>ATP</name>
        <dbReference type="ChEBI" id="CHEBI:30616"/>
    </ligand>
</feature>
<feature type="binding site" evidence="1">
    <location>
        <begin position="151"/>
        <end position="153"/>
    </location>
    <ligand>
        <name>ATP</name>
        <dbReference type="ChEBI" id="CHEBI:30616"/>
    </ligand>
</feature>
<feature type="binding site" evidence="1">
    <location>
        <position position="194"/>
    </location>
    <ligand>
        <name>ATP</name>
        <dbReference type="ChEBI" id="CHEBI:30616"/>
    </ligand>
</feature>
<feature type="binding site" evidence="1">
    <location>
        <position position="204"/>
    </location>
    <ligand>
        <name>ATP</name>
        <dbReference type="ChEBI" id="CHEBI:30616"/>
    </ligand>
</feature>
<feature type="binding site" evidence="1">
    <location>
        <position position="241"/>
    </location>
    <ligand>
        <name>ATP</name>
        <dbReference type="ChEBI" id="CHEBI:30616"/>
    </ligand>
</feature>
<feature type="binding site" evidence="1">
    <location>
        <position position="333"/>
    </location>
    <ligand>
        <name>DNA</name>
        <dbReference type="ChEBI" id="CHEBI:16991"/>
    </ligand>
</feature>
<feature type="binding site" evidence="1">
    <location>
        <position position="338"/>
    </location>
    <ligand>
        <name>DNA</name>
        <dbReference type="ChEBI" id="CHEBI:16991"/>
    </ligand>
</feature>
<name>RUVB_KORVE</name>
<sequence>MIASVGDSRYYPKSVANGEKSDQRERLVSAIPVEDDSSFELKLRPQWLREFIGQPKVKENLAVAIEAARSRGEALDHVLLYGPPGLGKTTLANIIANEMQAQFQQTSGPTLQIKGDLTAILTNVRDKQVLFIDEVHRLQPALEELLYSAVEDYKLDIIIGQGPSARTHTIDVAPFTLVAATTRAGLLSAPLRSRFGIVLRLEFYTTEDLKIILKRSAEILNVEIDEGGAAEIATRCRGTPRIANRLLRRVRDYAQVRGAGKIDRETAQKALEMLEVDQHGFDEVDRRLMLTIIEKYQGGPVGLNTLAASLAEETDAIEEIYEPFLIQLGFLDRTPRGRVATHLAYEYFKMKPPKKQDSLF</sequence>
<proteinExistence type="inferred from homology"/>